<comment type="function">
    <text evidence="2">A positive regulator of the alternate pathway of complement (By similarity). It binds to and stabilizes the C3- and C5-convertase enzyme complexes (By similarity). Inhibits CFI-CFH mediated degradation of Inhibits CFI-CFH mediated degradation of Complement C3 beta chain (C3b) (By similarity).</text>
</comment>
<comment type="subunit">
    <text evidence="2">In plasma, properdin exists as dimers, trimers or tetramers in the relative proportions of 26:54:20 (By similarity). Interacts with the pro-C3-convertase enzyme complex (C3b-Bb) comprised of Complement C3 beta chain (C3b) and the Complement factor B Bb fragment (Bb), where it binds (via its TSP type-1 5 domain) with C3b and Bb (By similarity). This interaction stabilizes the complex and allows it to become the active C3-convertase enzyme complex (C3b-Bb-FP) (By similarity). Interacts with C3b (By similarity). Interacts with CFB (By similarity).</text>
</comment>
<comment type="subcellular location">
    <subcellularLocation>
        <location evidence="2">Secreted</location>
    </subcellularLocation>
</comment>
<comment type="domain">
    <text evidence="2">TSP type-1 domain 0 binds to TSP type-1 domain 4, and TSP type-1 domain 1 binds to TSP type-1 domain 6 (By similarity). These interactions mediate multimerization (By similarity).</text>
</comment>
<proteinExistence type="evidence at transcript level"/>
<accession>Q64181</accession>
<evidence type="ECO:0000250" key="1"/>
<evidence type="ECO:0000250" key="2">
    <source>
        <dbReference type="UniProtKB" id="P27918"/>
    </source>
</evidence>
<evidence type="ECO:0000255" key="3"/>
<evidence type="ECO:0000255" key="4">
    <source>
        <dbReference type="PROSITE-ProRule" id="PRU00210"/>
    </source>
</evidence>
<reference key="1">
    <citation type="journal article" date="1995" name="Immunology">
        <title>Cloning and characterization of the cDNA encoding guinea-pig properdin: a comparison of properdin from three species.</title>
        <authorList>
            <person name="Maves K.K."/>
            <person name="Guenthner S.T."/>
            <person name="Densen P."/>
            <person name="Moser D.R."/>
            <person name="Weiler J.M."/>
        </authorList>
    </citation>
    <scope>NUCLEOTIDE SEQUENCE [MRNA]</scope>
    <source>
        <tissue>Spleen</tissue>
    </source>
</reference>
<feature type="signal peptide" evidence="1">
    <location>
        <begin position="1"/>
        <end position="26"/>
    </location>
</feature>
<feature type="chain" id="PRO_0000035862" description="Properdin">
    <location>
        <begin position="27"/>
        <end position="470"/>
    </location>
</feature>
<feature type="domain" description="TSP type-1 0" evidence="4">
    <location>
        <begin position="27"/>
        <end position="75"/>
    </location>
</feature>
<feature type="domain" description="TSP type-1 1" evidence="4">
    <location>
        <begin position="76"/>
        <end position="133"/>
    </location>
</feature>
<feature type="domain" description="TSP type-1 2" evidence="4">
    <location>
        <begin position="135"/>
        <end position="190"/>
    </location>
</feature>
<feature type="domain" description="TSP type-1 3" evidence="4">
    <location>
        <begin position="192"/>
        <end position="254"/>
    </location>
</feature>
<feature type="domain" description="TSP type-1 4" evidence="4">
    <location>
        <begin position="256"/>
        <end position="312"/>
    </location>
</feature>
<feature type="domain" description="TSP type-1 5" evidence="4">
    <location>
        <begin position="314"/>
        <end position="376"/>
    </location>
</feature>
<feature type="domain" description="TSP type-1 6" evidence="4">
    <location>
        <begin position="380"/>
        <end position="463"/>
    </location>
</feature>
<feature type="region of interest" description="Interaction with Complement C3 beta chain" evidence="2">
    <location>
        <begin position="350"/>
        <end position="358"/>
    </location>
</feature>
<feature type="glycosylation site" description="C-linked (Man) tryptophan" evidence="2">
    <location>
        <position position="82"/>
    </location>
</feature>
<feature type="glycosylation site" description="C-linked (Man) tryptophan" evidence="2">
    <location>
        <position position="85"/>
    </location>
</feature>
<feature type="glycosylation site" description="C-linked (Man) tryptophan" evidence="2">
    <location>
        <position position="138"/>
    </location>
</feature>
<feature type="glycosylation site" description="C-linked (Man) tryptophan" evidence="2">
    <location>
        <position position="141"/>
    </location>
</feature>
<feature type="glycosylation site" description="C-linked (Man) tryptophan" evidence="2">
    <location>
        <position position="144"/>
    </location>
</feature>
<feature type="glycosylation site" description="O-linked (Fuc...) threonine" evidence="2">
    <location>
        <position position="150"/>
    </location>
</feature>
<feature type="glycosylation site" description="C-linked (Man) tryptophan" evidence="2">
    <location>
        <position position="195"/>
    </location>
</feature>
<feature type="glycosylation site" description="C-linked (Man) tryptophan" evidence="2">
    <location>
        <position position="198"/>
    </location>
</feature>
<feature type="glycosylation site" description="C-linked (Man) tryptophan" evidence="2">
    <location>
        <position position="201"/>
    </location>
</feature>
<feature type="glycosylation site" description="O-linked (Fuc...) serine" evidence="2">
    <location>
        <position position="207"/>
    </location>
</feature>
<feature type="glycosylation site" description="C-linked (Man) tryptophan" evidence="2">
    <location>
        <position position="259"/>
    </location>
</feature>
<feature type="glycosylation site" description="C-linked (Man) tryptophan" evidence="2">
    <location>
        <position position="262"/>
    </location>
</feature>
<feature type="glycosylation site" description="O-linked (Fuc...) threonine" evidence="2">
    <location>
        <position position="271"/>
    </location>
</feature>
<feature type="glycosylation site" description="C-linked (Man) tryptophan" evidence="2">
    <location>
        <position position="320"/>
    </location>
</feature>
<feature type="glycosylation site" description="C-linked (Man) tryptophan" evidence="2">
    <location>
        <position position="323"/>
    </location>
</feature>
<feature type="glycosylation site" description="C-linked (Man) tryptophan" evidence="2">
    <location>
        <position position="383"/>
    </location>
</feature>
<feature type="glycosylation site" description="C-linked (Man) tryptophan" evidence="2">
    <location>
        <position position="386"/>
    </location>
</feature>
<feature type="glycosylation site" description="C-linked (Man) tryptophan" evidence="2">
    <location>
        <position position="389"/>
    </location>
</feature>
<feature type="glycosylation site" description="N-linked (GlcNAc...) asparagine" evidence="3">
    <location>
        <position position="429"/>
    </location>
</feature>
<feature type="disulfide bond" evidence="2 4">
    <location>
        <begin position="31"/>
        <end position="55"/>
    </location>
</feature>
<feature type="disulfide bond" evidence="2 4">
    <location>
        <begin position="42"/>
        <end position="71"/>
    </location>
</feature>
<feature type="disulfide bond" evidence="2">
    <location>
        <begin position="56"/>
        <end position="74"/>
    </location>
</feature>
<feature type="disulfide bond" evidence="4">
    <location>
        <begin position="88"/>
        <end position="126"/>
    </location>
</feature>
<feature type="disulfide bond" evidence="4">
    <location>
        <begin position="92"/>
        <end position="132"/>
    </location>
</feature>
<feature type="disulfide bond" evidence="4">
    <location>
        <begin position="103"/>
        <end position="110"/>
    </location>
</feature>
<feature type="disulfide bond" evidence="2">
    <location>
        <begin position="131"/>
        <end position="169"/>
    </location>
</feature>
<feature type="disulfide bond" evidence="4">
    <location>
        <begin position="147"/>
        <end position="183"/>
    </location>
</feature>
<feature type="disulfide bond" evidence="4">
    <location>
        <begin position="151"/>
        <end position="189"/>
    </location>
</feature>
<feature type="disulfide bond" evidence="4">
    <location>
        <begin position="162"/>
        <end position="173"/>
    </location>
</feature>
<feature type="disulfide bond" evidence="4">
    <location>
        <begin position="204"/>
        <end position="247"/>
    </location>
</feature>
<feature type="disulfide bond" evidence="4">
    <location>
        <begin position="208"/>
        <end position="253"/>
    </location>
</feature>
<feature type="disulfide bond" evidence="4">
    <location>
        <begin position="223"/>
        <end position="237"/>
    </location>
</feature>
<feature type="disulfide bond" evidence="4">
    <location>
        <begin position="268"/>
        <end position="305"/>
    </location>
</feature>
<feature type="disulfide bond" evidence="4">
    <location>
        <begin position="272"/>
        <end position="311"/>
    </location>
</feature>
<feature type="disulfide bond" evidence="4">
    <location>
        <begin position="283"/>
        <end position="295"/>
    </location>
</feature>
<feature type="disulfide bond" evidence="4">
    <location>
        <begin position="326"/>
        <end position="369"/>
    </location>
</feature>
<feature type="disulfide bond" evidence="4">
    <location>
        <begin position="336"/>
        <end position="375"/>
    </location>
</feature>
<feature type="disulfide bond" evidence="4">
    <location>
        <begin position="349"/>
        <end position="359"/>
    </location>
</feature>
<feature type="disulfide bond" evidence="4">
    <location>
        <begin position="392"/>
        <end position="456"/>
    </location>
</feature>
<feature type="disulfide bond" evidence="4">
    <location>
        <begin position="396"/>
        <end position="462"/>
    </location>
</feature>
<feature type="disulfide bond" evidence="4">
    <location>
        <begin position="408"/>
        <end position="440"/>
    </location>
</feature>
<name>PROP_CAVPO</name>
<protein>
    <recommendedName>
        <fullName>Properdin</fullName>
    </recommendedName>
    <alternativeName>
        <fullName>Complement factor P</fullName>
    </alternativeName>
</protein>
<sequence length="470" mass="51431">MTAPVQVPQSLLLLLMLLLTLPATGSDPVLCFSQYEDSSSKCKDLLGKDVSLEDCCLNAAYAFKERDNGHCQACRSPRWSPWSSWAPCSVSCSEGSQLRHRRCIGWGGQCSENKAPGTLEWQLQACEEQQCCPEMGGWSNWEPWGPCTVTCSKGTRIRRRVCNNPAPKCGGHCPGVAQESEACDTQQVCPTHGAWGPWGPWSSCLSSCHGGPHKPVETRSRTCSAPEPSKNPPGNPCPGTAYEQQSCAGLPPCPVAGGWGPWGSVSPCSVTCGLGQILEQRKCDNPVPQHGGSFCTGDDTRAHICNTAVPCPVDGEWEPWGDWSTCTRPHLSAIRCKEIVGQQTRVRICKGRKFNGQRCPGKHQEIRHCYNIQNCIFGEKGSWSQWTPWGLCTPPCGANPTRVRQRRCMASLPKFSPTVSVVEGQGEKNVTFWGKPLAQCEELQGQKVLLEEKRPCLHVPACKDPEEEEP</sequence>
<dbReference type="EMBL" id="S81116">
    <property type="protein sequence ID" value="AAB35918.1"/>
    <property type="molecule type" value="mRNA"/>
</dbReference>
<dbReference type="SMR" id="Q64181"/>
<dbReference type="FunCoup" id="Q64181">
    <property type="interactions" value="156"/>
</dbReference>
<dbReference type="STRING" id="10141.ENSCPOP00000006537"/>
<dbReference type="GlyCosmos" id="Q64181">
    <property type="glycosylation" value="19 sites, No reported glycans"/>
</dbReference>
<dbReference type="eggNOG" id="KOG4475">
    <property type="taxonomic scope" value="Eukaryota"/>
</dbReference>
<dbReference type="InParanoid" id="Q64181"/>
<dbReference type="Proteomes" id="UP000005447">
    <property type="component" value="Unassembled WGS sequence"/>
</dbReference>
<dbReference type="GO" id="GO:0005576">
    <property type="term" value="C:extracellular region"/>
    <property type="evidence" value="ECO:0007669"/>
    <property type="project" value="UniProtKB-SubCell"/>
</dbReference>
<dbReference type="GO" id="GO:0006957">
    <property type="term" value="P:complement activation, alternative pathway"/>
    <property type="evidence" value="ECO:0007669"/>
    <property type="project" value="UniProtKB-KW"/>
</dbReference>
<dbReference type="FunFam" id="2.20.100.10:FF:000001">
    <property type="entry name" value="semaphorin-5A isoform X1"/>
    <property type="match status" value="3"/>
</dbReference>
<dbReference type="Gene3D" id="2.20.100.10">
    <property type="entry name" value="Thrombospondin type-1 (TSP1) repeat"/>
    <property type="match status" value="5"/>
</dbReference>
<dbReference type="InterPro" id="IPR049536">
    <property type="entry name" value="CFP_TSR-0"/>
</dbReference>
<dbReference type="InterPro" id="IPR054019">
    <property type="entry name" value="CFP_TSR_C"/>
</dbReference>
<dbReference type="InterPro" id="IPR052065">
    <property type="entry name" value="Compl_asym_regulator"/>
</dbReference>
<dbReference type="InterPro" id="IPR000884">
    <property type="entry name" value="TSP1_rpt"/>
</dbReference>
<dbReference type="InterPro" id="IPR036383">
    <property type="entry name" value="TSP1_rpt_sf"/>
</dbReference>
<dbReference type="PANTHER" id="PTHR22906">
    <property type="entry name" value="PROPERDIN"/>
    <property type="match status" value="1"/>
</dbReference>
<dbReference type="PANTHER" id="PTHR22906:SF43">
    <property type="entry name" value="PROPERDIN"/>
    <property type="match status" value="1"/>
</dbReference>
<dbReference type="Pfam" id="PF22195">
    <property type="entry name" value="TSP1_CFP_C"/>
    <property type="match status" value="1"/>
</dbReference>
<dbReference type="Pfam" id="PF00090">
    <property type="entry name" value="TSP_1"/>
    <property type="match status" value="5"/>
</dbReference>
<dbReference type="Pfam" id="PF18487">
    <property type="entry name" value="TSR"/>
    <property type="match status" value="1"/>
</dbReference>
<dbReference type="PRINTS" id="PR01705">
    <property type="entry name" value="TSP1REPEAT"/>
</dbReference>
<dbReference type="SMART" id="SM00209">
    <property type="entry name" value="TSP1"/>
    <property type="match status" value="6"/>
</dbReference>
<dbReference type="SUPFAM" id="SSF82895">
    <property type="entry name" value="TSP-1 type 1 repeat"/>
    <property type="match status" value="6"/>
</dbReference>
<dbReference type="PROSITE" id="PS50092">
    <property type="entry name" value="TSP1"/>
    <property type="match status" value="6"/>
</dbReference>
<organism>
    <name type="scientific">Cavia porcellus</name>
    <name type="common">Guinea pig</name>
    <dbReference type="NCBI Taxonomy" id="10141"/>
    <lineage>
        <taxon>Eukaryota</taxon>
        <taxon>Metazoa</taxon>
        <taxon>Chordata</taxon>
        <taxon>Craniata</taxon>
        <taxon>Vertebrata</taxon>
        <taxon>Euteleostomi</taxon>
        <taxon>Mammalia</taxon>
        <taxon>Eutheria</taxon>
        <taxon>Euarchontoglires</taxon>
        <taxon>Glires</taxon>
        <taxon>Rodentia</taxon>
        <taxon>Hystricomorpha</taxon>
        <taxon>Caviidae</taxon>
        <taxon>Cavia</taxon>
    </lineage>
</organism>
<keyword id="KW-0179">Complement alternate pathway</keyword>
<keyword id="KW-1015">Disulfide bond</keyword>
<keyword id="KW-0325">Glycoprotein</keyword>
<keyword id="KW-0391">Immunity</keyword>
<keyword id="KW-0399">Innate immunity</keyword>
<keyword id="KW-1185">Reference proteome</keyword>
<keyword id="KW-0677">Repeat</keyword>
<keyword id="KW-0964">Secreted</keyword>
<keyword id="KW-0732">Signal</keyword>
<gene>
    <name type="primary">CFP</name>
    <name type="synonym">PFC</name>
</gene>